<organism>
    <name type="scientific">Aliivibrio salmonicida (strain LFI1238)</name>
    <name type="common">Vibrio salmonicida (strain LFI1238)</name>
    <dbReference type="NCBI Taxonomy" id="316275"/>
    <lineage>
        <taxon>Bacteria</taxon>
        <taxon>Pseudomonadati</taxon>
        <taxon>Pseudomonadota</taxon>
        <taxon>Gammaproteobacteria</taxon>
        <taxon>Vibrionales</taxon>
        <taxon>Vibrionaceae</taxon>
        <taxon>Aliivibrio</taxon>
    </lineage>
</organism>
<accession>B6ELC0</accession>
<reference key="1">
    <citation type="journal article" date="2008" name="BMC Genomics">
        <title>The genome sequence of the fish pathogen Aliivibrio salmonicida strain LFI1238 shows extensive evidence of gene decay.</title>
        <authorList>
            <person name="Hjerde E."/>
            <person name="Lorentzen M.S."/>
            <person name="Holden M.T."/>
            <person name="Seeger K."/>
            <person name="Paulsen S."/>
            <person name="Bason N."/>
            <person name="Churcher C."/>
            <person name="Harris D."/>
            <person name="Norbertczak H."/>
            <person name="Quail M.A."/>
            <person name="Sanders S."/>
            <person name="Thurston S."/>
            <person name="Parkhill J."/>
            <person name="Willassen N.P."/>
            <person name="Thomson N.R."/>
        </authorList>
    </citation>
    <scope>NUCLEOTIDE SEQUENCE [LARGE SCALE GENOMIC DNA]</scope>
    <source>
        <strain>LFI1238</strain>
    </source>
</reference>
<comment type="function">
    <text evidence="1">Specifically methylates the cytosine at position 1407 (m5C1407) of 16S rRNA.</text>
</comment>
<comment type="catalytic activity">
    <reaction evidence="1">
        <text>cytidine(1407) in 16S rRNA + S-adenosyl-L-methionine = 5-methylcytidine(1407) in 16S rRNA + S-adenosyl-L-homocysteine + H(+)</text>
        <dbReference type="Rhea" id="RHEA:42756"/>
        <dbReference type="Rhea" id="RHEA-COMP:10223"/>
        <dbReference type="Rhea" id="RHEA-COMP:10224"/>
        <dbReference type="ChEBI" id="CHEBI:15378"/>
        <dbReference type="ChEBI" id="CHEBI:57856"/>
        <dbReference type="ChEBI" id="CHEBI:59789"/>
        <dbReference type="ChEBI" id="CHEBI:74483"/>
        <dbReference type="ChEBI" id="CHEBI:82748"/>
        <dbReference type="EC" id="2.1.1.178"/>
    </reaction>
</comment>
<comment type="subcellular location">
    <subcellularLocation>
        <location evidence="1">Cytoplasm</location>
    </subcellularLocation>
</comment>
<comment type="similarity">
    <text evidence="1">Belongs to the class I-like SAM-binding methyltransferase superfamily. RsmB/NOP family.</text>
</comment>
<evidence type="ECO:0000255" key="1">
    <source>
        <dbReference type="HAMAP-Rule" id="MF_01579"/>
    </source>
</evidence>
<dbReference type="EC" id="2.1.1.178" evidence="1"/>
<dbReference type="EMBL" id="FM178379">
    <property type="protein sequence ID" value="CAQ79223.1"/>
    <property type="molecule type" value="Genomic_DNA"/>
</dbReference>
<dbReference type="RefSeq" id="WP_012550190.1">
    <property type="nucleotide sequence ID" value="NC_011312.1"/>
</dbReference>
<dbReference type="SMR" id="B6ELC0"/>
<dbReference type="KEGG" id="vsa:VSAL_I1538"/>
<dbReference type="eggNOG" id="COG0144">
    <property type="taxonomic scope" value="Bacteria"/>
</dbReference>
<dbReference type="eggNOG" id="COG3270">
    <property type="taxonomic scope" value="Bacteria"/>
</dbReference>
<dbReference type="HOGENOM" id="CLU_005316_6_2_6"/>
<dbReference type="Proteomes" id="UP000001730">
    <property type="component" value="Chromosome 1"/>
</dbReference>
<dbReference type="GO" id="GO:0005737">
    <property type="term" value="C:cytoplasm"/>
    <property type="evidence" value="ECO:0007669"/>
    <property type="project" value="UniProtKB-SubCell"/>
</dbReference>
<dbReference type="GO" id="GO:0003723">
    <property type="term" value="F:RNA binding"/>
    <property type="evidence" value="ECO:0007669"/>
    <property type="project" value="UniProtKB-KW"/>
</dbReference>
<dbReference type="GO" id="GO:0009383">
    <property type="term" value="F:rRNA (cytosine-C5-)-methyltransferase activity"/>
    <property type="evidence" value="ECO:0007669"/>
    <property type="project" value="TreeGrafter"/>
</dbReference>
<dbReference type="GO" id="GO:0070475">
    <property type="term" value="P:rRNA base methylation"/>
    <property type="evidence" value="ECO:0007669"/>
    <property type="project" value="TreeGrafter"/>
</dbReference>
<dbReference type="CDD" id="cd02440">
    <property type="entry name" value="AdoMet_MTases"/>
    <property type="match status" value="1"/>
</dbReference>
<dbReference type="Gene3D" id="3.10.450.720">
    <property type="match status" value="1"/>
</dbReference>
<dbReference type="Gene3D" id="3.40.50.150">
    <property type="entry name" value="Vaccinia Virus protein VP39"/>
    <property type="match status" value="1"/>
</dbReference>
<dbReference type="HAMAP" id="MF_01579">
    <property type="entry name" value="16SrRNA_methyltr_F"/>
    <property type="match status" value="1"/>
</dbReference>
<dbReference type="InterPro" id="IPR031341">
    <property type="entry name" value="Methyltr_RsmF_N"/>
</dbReference>
<dbReference type="InterPro" id="IPR049560">
    <property type="entry name" value="MeTrfase_RsmB-F_NOP2_cat"/>
</dbReference>
<dbReference type="InterPro" id="IPR001678">
    <property type="entry name" value="MeTrfase_RsmB-F_NOP2_dom"/>
</dbReference>
<dbReference type="InterPro" id="IPR027391">
    <property type="entry name" value="Nol1_Nop2_Fmu_2"/>
</dbReference>
<dbReference type="InterPro" id="IPR011023">
    <property type="entry name" value="Nop2p"/>
</dbReference>
<dbReference type="InterPro" id="IPR023267">
    <property type="entry name" value="RCMT"/>
</dbReference>
<dbReference type="InterPro" id="IPR023545">
    <property type="entry name" value="rRNA_ssu_MeTfrase_F"/>
</dbReference>
<dbReference type="InterPro" id="IPR029063">
    <property type="entry name" value="SAM-dependent_MTases_sf"/>
</dbReference>
<dbReference type="InterPro" id="IPR048457">
    <property type="entry name" value="YebU_pre-PUA_dom"/>
</dbReference>
<dbReference type="NCBIfam" id="TIGR00446">
    <property type="entry name" value="nop2p"/>
    <property type="match status" value="1"/>
</dbReference>
<dbReference type="NCBIfam" id="NF008898">
    <property type="entry name" value="PRK11933.1"/>
    <property type="match status" value="1"/>
</dbReference>
<dbReference type="PANTHER" id="PTHR22807:SF30">
    <property type="entry name" value="28S RRNA (CYTOSINE(4447)-C(5))-METHYLTRANSFERASE-RELATED"/>
    <property type="match status" value="1"/>
</dbReference>
<dbReference type="PANTHER" id="PTHR22807">
    <property type="entry name" value="NOP2 YEAST -RELATED NOL1/NOP2/FMU SUN DOMAIN-CONTAINING"/>
    <property type="match status" value="1"/>
</dbReference>
<dbReference type="Pfam" id="PF01189">
    <property type="entry name" value="Methyltr_RsmB-F"/>
    <property type="match status" value="1"/>
</dbReference>
<dbReference type="Pfam" id="PF17125">
    <property type="entry name" value="Methyltr_RsmF_N"/>
    <property type="match status" value="1"/>
</dbReference>
<dbReference type="Pfam" id="PF13636">
    <property type="entry name" value="Methyltranf_PUA"/>
    <property type="match status" value="1"/>
</dbReference>
<dbReference type="Pfam" id="PF21150">
    <property type="entry name" value="YebU_pre-PUA_dom"/>
    <property type="match status" value="1"/>
</dbReference>
<dbReference type="PRINTS" id="PR02008">
    <property type="entry name" value="RCMTFAMILY"/>
</dbReference>
<dbReference type="SUPFAM" id="SSF53335">
    <property type="entry name" value="S-adenosyl-L-methionine-dependent methyltransferases"/>
    <property type="match status" value="1"/>
</dbReference>
<dbReference type="PROSITE" id="PS51686">
    <property type="entry name" value="SAM_MT_RSMB_NOP"/>
    <property type="match status" value="1"/>
</dbReference>
<keyword id="KW-0963">Cytoplasm</keyword>
<keyword id="KW-0489">Methyltransferase</keyword>
<keyword id="KW-0694">RNA-binding</keyword>
<keyword id="KW-0698">rRNA processing</keyword>
<keyword id="KW-0949">S-adenosyl-L-methionine</keyword>
<keyword id="KW-0808">Transferase</keyword>
<proteinExistence type="inferred from homology"/>
<feature type="chain" id="PRO_1000147563" description="Ribosomal RNA small subunit methyltransferase F">
    <location>
        <begin position="1"/>
        <end position="473"/>
    </location>
</feature>
<feature type="active site" description="Nucleophile" evidence="1">
    <location>
        <position position="246"/>
    </location>
</feature>
<feature type="binding site" evidence="1">
    <location>
        <begin position="124"/>
        <end position="130"/>
    </location>
    <ligand>
        <name>S-adenosyl-L-methionine</name>
        <dbReference type="ChEBI" id="CHEBI:59789"/>
    </ligand>
</feature>
<feature type="binding site" evidence="1">
    <location>
        <position position="148"/>
    </location>
    <ligand>
        <name>S-adenosyl-L-methionine</name>
        <dbReference type="ChEBI" id="CHEBI:59789"/>
    </ligand>
</feature>
<feature type="binding site" evidence="1">
    <location>
        <position position="175"/>
    </location>
    <ligand>
        <name>S-adenosyl-L-methionine</name>
        <dbReference type="ChEBI" id="CHEBI:59789"/>
    </ligand>
</feature>
<feature type="binding site" evidence="1">
    <location>
        <position position="193"/>
    </location>
    <ligand>
        <name>S-adenosyl-L-methionine</name>
        <dbReference type="ChEBI" id="CHEBI:59789"/>
    </ligand>
</feature>
<name>RSMF_ALISL</name>
<gene>
    <name evidence="1" type="primary">rsmF</name>
    <name type="ordered locus">VSAL_I1538</name>
</gene>
<sequence length="473" mass="53203">MHDNIFLPDAFLAQVQETMPSHLSMDEFVAACKRPLRRSIRVNTLKNSVEEFKKRAEEKQWQLDPVPWCDTGFWITRQESDTVKLGSTAEHMAGLFYIQEASSMMPVTALLKDNDNIEMALDMASAPGSKTTQLAAGMKNKGALVANEYSSSRVKILCSNVQRCGVSNVALTHFDGRVFGGWLPETFDSILLDAPCSGEGTIRKDPDAMHNWSPESVIEIGDTQRDLIKSAFHALKPGGVMVYSTCTLNHEENQNICHHLVTEFGDAVTFEPLGDLFENAEKALTKEGFLHIYPQIFDSEGFFVAKIRKNSATIAPEVKKRLGKFPFALANQKEIKAIEDELHNTLQLSIPETNELWIRDKEVWAFPKRMSSLIGEMRYHRIGFKLAETHKKGYRWQHEAIMAIAKADNPTSSELTIEQAREWYMGRDVRPDNVGKGETIVTFNGAVIGLGKWVGNRIKNGLPRELVRDGNLF</sequence>
<protein>
    <recommendedName>
        <fullName evidence="1">Ribosomal RNA small subunit methyltransferase F</fullName>
        <ecNumber evidence="1">2.1.1.178</ecNumber>
    </recommendedName>
    <alternativeName>
        <fullName evidence="1">16S rRNA m5C1407 methyltransferase</fullName>
    </alternativeName>
    <alternativeName>
        <fullName evidence="1">rRNA (cytosine-C(5)-)-methyltransferase RsmF</fullName>
    </alternativeName>
</protein>